<name>YADK_ECOLI</name>
<accession>P37016</accession>
<dbReference type="EMBL" id="U00096">
    <property type="protein sequence ID" value="AAC73247.1"/>
    <property type="molecule type" value="Genomic_DNA"/>
</dbReference>
<dbReference type="EMBL" id="AP009048">
    <property type="protein sequence ID" value="BAB96713.1"/>
    <property type="molecule type" value="Genomic_DNA"/>
</dbReference>
<dbReference type="PIR" id="H64736">
    <property type="entry name" value="H64736"/>
</dbReference>
<dbReference type="RefSeq" id="NP_414678.1">
    <property type="nucleotide sequence ID" value="NC_000913.3"/>
</dbReference>
<dbReference type="RefSeq" id="WP_000553749.1">
    <property type="nucleotide sequence ID" value="NZ_STEB01000010.1"/>
</dbReference>
<dbReference type="SMR" id="P37016"/>
<dbReference type="BioGRID" id="4259739">
    <property type="interactions" value="12"/>
</dbReference>
<dbReference type="FunCoup" id="P37016">
    <property type="interactions" value="3"/>
</dbReference>
<dbReference type="STRING" id="511145.b0136"/>
<dbReference type="PaxDb" id="511145-b0136"/>
<dbReference type="EnsemblBacteria" id="AAC73247">
    <property type="protein sequence ID" value="AAC73247"/>
    <property type="gene ID" value="b0136"/>
</dbReference>
<dbReference type="GeneID" id="944835"/>
<dbReference type="KEGG" id="ecj:JW0132"/>
<dbReference type="KEGG" id="eco:b0136"/>
<dbReference type="KEGG" id="ecoc:C3026_00585"/>
<dbReference type="PATRIC" id="fig|1411691.4.peg.2145"/>
<dbReference type="EchoBASE" id="EB2229"/>
<dbReference type="eggNOG" id="COG3539">
    <property type="taxonomic scope" value="Bacteria"/>
</dbReference>
<dbReference type="HOGENOM" id="CLU_119930_0_0_6"/>
<dbReference type="InParanoid" id="P37016"/>
<dbReference type="OMA" id="TFYARMQ"/>
<dbReference type="OrthoDB" id="6572549at2"/>
<dbReference type="BioCyc" id="EcoCyc:EG12325-MONOMER"/>
<dbReference type="PRO" id="PR:P37016"/>
<dbReference type="Proteomes" id="UP000000625">
    <property type="component" value="Chromosome"/>
</dbReference>
<dbReference type="GO" id="GO:0009289">
    <property type="term" value="C:pilus"/>
    <property type="evidence" value="ECO:0000315"/>
    <property type="project" value="EcoCyc"/>
</dbReference>
<dbReference type="GO" id="GO:0007155">
    <property type="term" value="P:cell adhesion"/>
    <property type="evidence" value="ECO:0000315"/>
    <property type="project" value="EcoCyc"/>
</dbReference>
<dbReference type="GO" id="GO:0043709">
    <property type="term" value="P:cell adhesion involved in single-species biofilm formation"/>
    <property type="evidence" value="ECO:0000315"/>
    <property type="project" value="EcoCyc"/>
</dbReference>
<dbReference type="Gene3D" id="2.60.40.1090">
    <property type="entry name" value="Fimbrial-type adhesion domain"/>
    <property type="match status" value="1"/>
</dbReference>
<dbReference type="InterPro" id="IPR036937">
    <property type="entry name" value="Adhesion_dom_fimbrial_sf"/>
</dbReference>
<dbReference type="InterPro" id="IPR008966">
    <property type="entry name" value="Adhesion_dom_sf"/>
</dbReference>
<dbReference type="InterPro" id="IPR050263">
    <property type="entry name" value="Bact_Fimbrial_Adh_Pro"/>
</dbReference>
<dbReference type="NCBIfam" id="NF011794">
    <property type="entry name" value="PRK15262.1"/>
    <property type="match status" value="1"/>
</dbReference>
<dbReference type="PANTHER" id="PTHR33420:SF5">
    <property type="entry name" value="FIMBRIAL SUBUNIT"/>
    <property type="match status" value="1"/>
</dbReference>
<dbReference type="PANTHER" id="PTHR33420">
    <property type="entry name" value="FIMBRIAL SUBUNIT ELFA-RELATED"/>
    <property type="match status" value="1"/>
</dbReference>
<dbReference type="SUPFAM" id="SSF49401">
    <property type="entry name" value="Bacterial adhesins"/>
    <property type="match status" value="1"/>
</dbReference>
<evidence type="ECO:0000255" key="1"/>
<evidence type="ECO:0000269" key="2">
    <source>
    </source>
</evidence>
<evidence type="ECO:0000305" key="3"/>
<evidence type="ECO:0000305" key="4">
    <source>
    </source>
</evidence>
<feature type="signal peptide" evidence="1">
    <location>
        <begin position="1"/>
        <end position="28"/>
    </location>
</feature>
<feature type="chain" id="PRO_0000168527" description="Uncharacterized fimbrial-like protein YadK">
    <location>
        <begin position="29"/>
        <end position="198"/>
    </location>
</feature>
<gene>
    <name type="primary">yadK</name>
    <name type="ordered locus">b0136</name>
    <name type="ordered locus">JW0132</name>
</gene>
<sequence length="198" mass="21112">MHPTQRKLMKRIILFLSLLFCIACPAIAGQDIDLVANVKNSTCKSGISNQGNIDLGVVGVGYFSGNVTPESYQPGGKEFTITVSDCALQGTGDVLNQLHIDFRALSGVMAAGSRQIFANEISSGASNVGVVIFSTQDSANTFNVLNASGGSRSVYPVMSDDMNGSSWKFSTRMQKIDPALSVTSGQLMSHVLVDIYYE</sequence>
<keyword id="KW-0281">Fimbrium</keyword>
<keyword id="KW-1185">Reference proteome</keyword>
<keyword id="KW-0732">Signal</keyword>
<reference key="1">
    <citation type="journal article" date="1994" name="Nucleic Acids Res.">
        <title>Systematic sequencing of the Escherichia coli genome: analysis of the 2.4-4.1 min (110,917-193,643 bp) region.</title>
        <authorList>
            <person name="Fujita N."/>
            <person name="Mori H."/>
            <person name="Yura T."/>
            <person name="Ishihama A."/>
        </authorList>
    </citation>
    <scope>NUCLEOTIDE SEQUENCE [LARGE SCALE GENOMIC DNA]</scope>
    <source>
        <strain>K12 / W3110 / ATCC 27325 / DSM 5911</strain>
    </source>
</reference>
<reference key="2">
    <citation type="journal article" date="1997" name="Science">
        <title>The complete genome sequence of Escherichia coli K-12.</title>
        <authorList>
            <person name="Blattner F.R."/>
            <person name="Plunkett G. III"/>
            <person name="Bloch C.A."/>
            <person name="Perna N.T."/>
            <person name="Burland V."/>
            <person name="Riley M."/>
            <person name="Collado-Vides J."/>
            <person name="Glasner J.D."/>
            <person name="Rode C.K."/>
            <person name="Mayhew G.F."/>
            <person name="Gregor J."/>
            <person name="Davis N.W."/>
            <person name="Kirkpatrick H.A."/>
            <person name="Goeden M.A."/>
            <person name="Rose D.J."/>
            <person name="Mau B."/>
            <person name="Shao Y."/>
        </authorList>
    </citation>
    <scope>NUCLEOTIDE SEQUENCE [LARGE SCALE GENOMIC DNA]</scope>
    <source>
        <strain>K12 / MG1655 / ATCC 47076</strain>
    </source>
</reference>
<reference key="3">
    <citation type="journal article" date="2006" name="Mol. Syst. Biol.">
        <title>Highly accurate genome sequences of Escherichia coli K-12 strains MG1655 and W3110.</title>
        <authorList>
            <person name="Hayashi K."/>
            <person name="Morooka N."/>
            <person name="Yamamoto Y."/>
            <person name="Fujita K."/>
            <person name="Isono K."/>
            <person name="Choi S."/>
            <person name="Ohtsubo E."/>
            <person name="Baba T."/>
            <person name="Wanner B.L."/>
            <person name="Mori H."/>
            <person name="Horiuchi T."/>
        </authorList>
    </citation>
    <scope>NUCLEOTIDE SEQUENCE [LARGE SCALE GENOMIC DNA]</scope>
    <source>
        <strain>K12 / W3110 / ATCC 27325 / DSM 5911</strain>
    </source>
</reference>
<reference key="4">
    <citation type="journal article" date="2010" name="Environ. Microbiol.">
        <title>Escherichia coli K-12 possesses multiple cryptic but functional chaperone-usher fimbriae with distinct surface specificities.</title>
        <authorList>
            <person name="Korea C.G."/>
            <person name="Badouraly R."/>
            <person name="Prevost M.C."/>
            <person name="Ghigo J.M."/>
            <person name="Beloin C."/>
        </authorList>
    </citation>
    <scope>FUNCTION</scope>
    <scope>INDUCTION</scope>
    <scope>DISRUPTION PHENOTYPE</scope>
    <source>
        <strain>K12 / MG1655 / ATCC 47076</strain>
    </source>
</reference>
<comment type="function">
    <text evidence="2">Part of the yadCKLM-htrE-yadVN fimbrial operon. Could contribute to adhesion to various surfaces in specific environmental niches.</text>
</comment>
<comment type="subcellular location">
    <subcellularLocation>
        <location evidence="3">Fimbrium</location>
    </subcellularLocation>
</comment>
<comment type="induction">
    <text evidence="2">Repressed by H-NS.</text>
</comment>
<comment type="disruption phenotype">
    <text evidence="2">Deletion of the operon under classical laboratory conditions does not result in any major effect on E.coli capacity to form biofilms compared with the wild-type strain.</text>
</comment>
<comment type="miscellaneous">
    <text evidence="4">The operon is cryptic under classical laboratory conditions, but is functional when constitutively expressed.</text>
</comment>
<comment type="similarity">
    <text evidence="3">Belongs to the fimbrial protein family.</text>
</comment>
<organism>
    <name type="scientific">Escherichia coli (strain K12)</name>
    <dbReference type="NCBI Taxonomy" id="83333"/>
    <lineage>
        <taxon>Bacteria</taxon>
        <taxon>Pseudomonadati</taxon>
        <taxon>Pseudomonadota</taxon>
        <taxon>Gammaproteobacteria</taxon>
        <taxon>Enterobacterales</taxon>
        <taxon>Enterobacteriaceae</taxon>
        <taxon>Escherichia</taxon>
    </lineage>
</organism>
<proteinExistence type="evidence at transcript level"/>
<protein>
    <recommendedName>
        <fullName>Uncharacterized fimbrial-like protein YadK</fullName>
    </recommendedName>
</protein>